<keyword id="KW-0131">Cell cycle</keyword>
<keyword id="KW-0132">Cell division</keyword>
<keyword id="KW-0342">GTP-binding</keyword>
<keyword id="KW-0460">Magnesium</keyword>
<keyword id="KW-0479">Metal-binding</keyword>
<keyword id="KW-0547">Nucleotide-binding</keyword>
<keyword id="KW-0717">Septation</keyword>
<name>ENGB_BACC7</name>
<proteinExistence type="inferred from homology"/>
<organism>
    <name type="scientific">Bacillus cereus (strain AH187)</name>
    <dbReference type="NCBI Taxonomy" id="405534"/>
    <lineage>
        <taxon>Bacteria</taxon>
        <taxon>Bacillati</taxon>
        <taxon>Bacillota</taxon>
        <taxon>Bacilli</taxon>
        <taxon>Bacillales</taxon>
        <taxon>Bacillaceae</taxon>
        <taxon>Bacillus</taxon>
        <taxon>Bacillus cereus group</taxon>
    </lineage>
</organism>
<evidence type="ECO:0000255" key="1">
    <source>
        <dbReference type="HAMAP-Rule" id="MF_00321"/>
    </source>
</evidence>
<comment type="function">
    <text evidence="1">Necessary for normal cell division and for the maintenance of normal septation.</text>
</comment>
<comment type="cofactor">
    <cofactor evidence="1">
        <name>Mg(2+)</name>
        <dbReference type="ChEBI" id="CHEBI:18420"/>
    </cofactor>
</comment>
<comment type="similarity">
    <text evidence="1">Belongs to the TRAFAC class TrmE-Era-EngA-EngB-Septin-like GTPase superfamily. EngB GTPase family.</text>
</comment>
<feature type="chain" id="PRO_1000119592" description="Probable GTP-binding protein EngB">
    <location>
        <begin position="1"/>
        <end position="198"/>
    </location>
</feature>
<feature type="domain" description="EngB-type G" evidence="1">
    <location>
        <begin position="22"/>
        <end position="195"/>
    </location>
</feature>
<feature type="binding site" evidence="1">
    <location>
        <begin position="30"/>
        <end position="37"/>
    </location>
    <ligand>
        <name>GTP</name>
        <dbReference type="ChEBI" id="CHEBI:37565"/>
    </ligand>
</feature>
<feature type="binding site" evidence="1">
    <location>
        <position position="37"/>
    </location>
    <ligand>
        <name>Mg(2+)</name>
        <dbReference type="ChEBI" id="CHEBI:18420"/>
    </ligand>
</feature>
<feature type="binding site" evidence="1">
    <location>
        <begin position="57"/>
        <end position="61"/>
    </location>
    <ligand>
        <name>GTP</name>
        <dbReference type="ChEBI" id="CHEBI:37565"/>
    </ligand>
</feature>
<feature type="binding site" evidence="1">
    <location>
        <position position="59"/>
    </location>
    <ligand>
        <name>Mg(2+)</name>
        <dbReference type="ChEBI" id="CHEBI:18420"/>
    </ligand>
</feature>
<feature type="binding site" evidence="1">
    <location>
        <begin position="75"/>
        <end position="78"/>
    </location>
    <ligand>
        <name>GTP</name>
        <dbReference type="ChEBI" id="CHEBI:37565"/>
    </ligand>
</feature>
<feature type="binding site" evidence="1">
    <location>
        <begin position="142"/>
        <end position="145"/>
    </location>
    <ligand>
        <name>GTP</name>
        <dbReference type="ChEBI" id="CHEBI:37565"/>
    </ligand>
</feature>
<feature type="binding site" evidence="1">
    <location>
        <begin position="174"/>
        <end position="176"/>
    </location>
    <ligand>
        <name>GTP</name>
        <dbReference type="ChEBI" id="CHEBI:37565"/>
    </ligand>
</feature>
<reference key="1">
    <citation type="submission" date="2008-10" db="EMBL/GenBank/DDBJ databases">
        <title>Genome sequence of Bacillus cereus AH187.</title>
        <authorList>
            <person name="Dodson R.J."/>
            <person name="Durkin A.S."/>
            <person name="Rosovitz M.J."/>
            <person name="Rasko D.A."/>
            <person name="Kolsto A.B."/>
            <person name="Okstad O.A."/>
            <person name="Ravel J."/>
            <person name="Sutton G."/>
        </authorList>
    </citation>
    <scope>NUCLEOTIDE SEQUENCE [LARGE SCALE GENOMIC DNA]</scope>
    <source>
        <strain>AH187</strain>
    </source>
</reference>
<sequence length="198" mass="22386">MKVTKADIVISAVKPEQYPDGDLPEIALAGRSNVGKSSFINKILNRKKLVRISSKPGKTQTLNFFLINEMMHFVDVPGYGYAKVSKTERAAWGKMIETYFTTREQLDAAVLVVDLRHKPTNDDVMMYDFLKHYDIPTIIIATKADKIPKGKWQKHLKVVKETLDIESGDEVVLFSSETGLGKEEAWKAIHKFTKTKNA</sequence>
<accession>B7HQM9</accession>
<protein>
    <recommendedName>
        <fullName evidence="1">Probable GTP-binding protein EngB</fullName>
    </recommendedName>
</protein>
<gene>
    <name evidence="1" type="primary">engB</name>
    <name type="ordered locus">BCAH187_A4605</name>
</gene>
<dbReference type="EMBL" id="CP001177">
    <property type="protein sequence ID" value="ACJ81375.1"/>
    <property type="molecule type" value="Genomic_DNA"/>
</dbReference>
<dbReference type="SMR" id="B7HQM9"/>
<dbReference type="KEGG" id="bcr:BCAH187_A4605"/>
<dbReference type="HOGENOM" id="CLU_033732_3_0_9"/>
<dbReference type="Proteomes" id="UP000002214">
    <property type="component" value="Chromosome"/>
</dbReference>
<dbReference type="GO" id="GO:0005829">
    <property type="term" value="C:cytosol"/>
    <property type="evidence" value="ECO:0007669"/>
    <property type="project" value="TreeGrafter"/>
</dbReference>
<dbReference type="GO" id="GO:0005525">
    <property type="term" value="F:GTP binding"/>
    <property type="evidence" value="ECO:0007669"/>
    <property type="project" value="UniProtKB-UniRule"/>
</dbReference>
<dbReference type="GO" id="GO:0046872">
    <property type="term" value="F:metal ion binding"/>
    <property type="evidence" value="ECO:0007669"/>
    <property type="project" value="UniProtKB-KW"/>
</dbReference>
<dbReference type="GO" id="GO:0000917">
    <property type="term" value="P:division septum assembly"/>
    <property type="evidence" value="ECO:0007669"/>
    <property type="project" value="UniProtKB-KW"/>
</dbReference>
<dbReference type="CDD" id="cd01876">
    <property type="entry name" value="YihA_EngB"/>
    <property type="match status" value="1"/>
</dbReference>
<dbReference type="FunFam" id="3.40.50.300:FF:000098">
    <property type="entry name" value="Probable GTP-binding protein EngB"/>
    <property type="match status" value="1"/>
</dbReference>
<dbReference type="Gene3D" id="3.40.50.300">
    <property type="entry name" value="P-loop containing nucleotide triphosphate hydrolases"/>
    <property type="match status" value="1"/>
</dbReference>
<dbReference type="HAMAP" id="MF_00321">
    <property type="entry name" value="GTPase_EngB"/>
    <property type="match status" value="1"/>
</dbReference>
<dbReference type="InterPro" id="IPR030393">
    <property type="entry name" value="G_ENGB_dom"/>
</dbReference>
<dbReference type="InterPro" id="IPR006073">
    <property type="entry name" value="GTP-bd"/>
</dbReference>
<dbReference type="InterPro" id="IPR019987">
    <property type="entry name" value="GTP-bd_ribosome_bio_YsxC"/>
</dbReference>
<dbReference type="InterPro" id="IPR027417">
    <property type="entry name" value="P-loop_NTPase"/>
</dbReference>
<dbReference type="InterPro" id="IPR005225">
    <property type="entry name" value="Small_GTP-bd"/>
</dbReference>
<dbReference type="NCBIfam" id="TIGR03598">
    <property type="entry name" value="GTPase_YsxC"/>
    <property type="match status" value="1"/>
</dbReference>
<dbReference type="NCBIfam" id="TIGR00231">
    <property type="entry name" value="small_GTP"/>
    <property type="match status" value="1"/>
</dbReference>
<dbReference type="PANTHER" id="PTHR11649:SF13">
    <property type="entry name" value="ENGB-TYPE G DOMAIN-CONTAINING PROTEIN"/>
    <property type="match status" value="1"/>
</dbReference>
<dbReference type="PANTHER" id="PTHR11649">
    <property type="entry name" value="MSS1/TRME-RELATED GTP-BINDING PROTEIN"/>
    <property type="match status" value="1"/>
</dbReference>
<dbReference type="Pfam" id="PF01926">
    <property type="entry name" value="MMR_HSR1"/>
    <property type="match status" value="1"/>
</dbReference>
<dbReference type="SUPFAM" id="SSF52540">
    <property type="entry name" value="P-loop containing nucleoside triphosphate hydrolases"/>
    <property type="match status" value="1"/>
</dbReference>
<dbReference type="PROSITE" id="PS51706">
    <property type="entry name" value="G_ENGB"/>
    <property type="match status" value="1"/>
</dbReference>